<evidence type="ECO:0000255" key="1">
    <source>
        <dbReference type="HAMAP-Rule" id="MF_00158"/>
    </source>
</evidence>
<accession>Q8XWT3</accession>
<organism>
    <name type="scientific">Ralstonia nicotianae (strain ATCC BAA-1114 / GMI1000)</name>
    <name type="common">Ralstonia solanacearum</name>
    <dbReference type="NCBI Taxonomy" id="267608"/>
    <lineage>
        <taxon>Bacteria</taxon>
        <taxon>Pseudomonadati</taxon>
        <taxon>Pseudomonadota</taxon>
        <taxon>Betaproteobacteria</taxon>
        <taxon>Burkholderiales</taxon>
        <taxon>Burkholderiaceae</taxon>
        <taxon>Ralstonia</taxon>
        <taxon>Ralstonia solanacearum species complex</taxon>
    </lineage>
</organism>
<dbReference type="EC" id="6.3.2.1" evidence="1"/>
<dbReference type="EMBL" id="AL646052">
    <property type="protein sequence ID" value="CAD16094.1"/>
    <property type="molecule type" value="Genomic_DNA"/>
</dbReference>
<dbReference type="RefSeq" id="WP_011002310.1">
    <property type="nucleotide sequence ID" value="NC_003295.1"/>
</dbReference>
<dbReference type="SMR" id="Q8XWT3"/>
<dbReference type="STRING" id="267608.RSc2387"/>
<dbReference type="EnsemblBacteria" id="CAD16094">
    <property type="protein sequence ID" value="CAD16094"/>
    <property type="gene ID" value="RSc2387"/>
</dbReference>
<dbReference type="KEGG" id="rso:RSc2387"/>
<dbReference type="eggNOG" id="COG0414">
    <property type="taxonomic scope" value="Bacteria"/>
</dbReference>
<dbReference type="HOGENOM" id="CLU_047148_0_0_4"/>
<dbReference type="UniPathway" id="UPA00028">
    <property type="reaction ID" value="UER00005"/>
</dbReference>
<dbReference type="Proteomes" id="UP000001436">
    <property type="component" value="Chromosome"/>
</dbReference>
<dbReference type="GO" id="GO:0005829">
    <property type="term" value="C:cytosol"/>
    <property type="evidence" value="ECO:0007669"/>
    <property type="project" value="TreeGrafter"/>
</dbReference>
<dbReference type="GO" id="GO:0005524">
    <property type="term" value="F:ATP binding"/>
    <property type="evidence" value="ECO:0007669"/>
    <property type="project" value="UniProtKB-KW"/>
</dbReference>
<dbReference type="GO" id="GO:0004592">
    <property type="term" value="F:pantoate-beta-alanine ligase activity"/>
    <property type="evidence" value="ECO:0007669"/>
    <property type="project" value="UniProtKB-UniRule"/>
</dbReference>
<dbReference type="GO" id="GO:0015940">
    <property type="term" value="P:pantothenate biosynthetic process"/>
    <property type="evidence" value="ECO:0007669"/>
    <property type="project" value="UniProtKB-UniRule"/>
</dbReference>
<dbReference type="CDD" id="cd00560">
    <property type="entry name" value="PanC"/>
    <property type="match status" value="1"/>
</dbReference>
<dbReference type="Gene3D" id="3.40.50.620">
    <property type="entry name" value="HUPs"/>
    <property type="match status" value="1"/>
</dbReference>
<dbReference type="Gene3D" id="3.30.1300.10">
    <property type="entry name" value="Pantoate-beta-alanine ligase, C-terminal domain"/>
    <property type="match status" value="1"/>
</dbReference>
<dbReference type="HAMAP" id="MF_00158">
    <property type="entry name" value="PanC"/>
    <property type="match status" value="1"/>
</dbReference>
<dbReference type="InterPro" id="IPR004821">
    <property type="entry name" value="Cyt_trans-like"/>
</dbReference>
<dbReference type="InterPro" id="IPR003721">
    <property type="entry name" value="Pantoate_ligase"/>
</dbReference>
<dbReference type="InterPro" id="IPR042176">
    <property type="entry name" value="Pantoate_ligase_C"/>
</dbReference>
<dbReference type="InterPro" id="IPR014729">
    <property type="entry name" value="Rossmann-like_a/b/a_fold"/>
</dbReference>
<dbReference type="NCBIfam" id="TIGR00125">
    <property type="entry name" value="cyt_tran_rel"/>
    <property type="match status" value="1"/>
</dbReference>
<dbReference type="NCBIfam" id="TIGR00018">
    <property type="entry name" value="panC"/>
    <property type="match status" value="1"/>
</dbReference>
<dbReference type="PANTHER" id="PTHR21299">
    <property type="entry name" value="CYTIDYLATE KINASE/PANTOATE-BETA-ALANINE LIGASE"/>
    <property type="match status" value="1"/>
</dbReference>
<dbReference type="PANTHER" id="PTHR21299:SF1">
    <property type="entry name" value="PANTOATE--BETA-ALANINE LIGASE"/>
    <property type="match status" value="1"/>
</dbReference>
<dbReference type="Pfam" id="PF02569">
    <property type="entry name" value="Pantoate_ligase"/>
    <property type="match status" value="1"/>
</dbReference>
<dbReference type="SUPFAM" id="SSF52374">
    <property type="entry name" value="Nucleotidylyl transferase"/>
    <property type="match status" value="1"/>
</dbReference>
<keyword id="KW-0067">ATP-binding</keyword>
<keyword id="KW-0963">Cytoplasm</keyword>
<keyword id="KW-0436">Ligase</keyword>
<keyword id="KW-0547">Nucleotide-binding</keyword>
<keyword id="KW-0566">Pantothenate biosynthesis</keyword>
<keyword id="KW-1185">Reference proteome</keyword>
<gene>
    <name evidence="1" type="primary">panC</name>
    <name type="ordered locus">RSc2387</name>
    <name type="ORF">RS02763</name>
</gene>
<feature type="chain" id="PRO_0000128260" description="Pantothenate synthetase">
    <location>
        <begin position="1"/>
        <end position="283"/>
    </location>
</feature>
<feature type="active site" description="Proton donor" evidence="1">
    <location>
        <position position="33"/>
    </location>
</feature>
<feature type="binding site" evidence="1">
    <location>
        <begin position="26"/>
        <end position="33"/>
    </location>
    <ligand>
        <name>ATP</name>
        <dbReference type="ChEBI" id="CHEBI:30616"/>
    </ligand>
</feature>
<feature type="binding site" evidence="1">
    <location>
        <position position="57"/>
    </location>
    <ligand>
        <name>(R)-pantoate</name>
        <dbReference type="ChEBI" id="CHEBI:15980"/>
    </ligand>
</feature>
<feature type="binding site" evidence="1">
    <location>
        <position position="57"/>
    </location>
    <ligand>
        <name>beta-alanine</name>
        <dbReference type="ChEBI" id="CHEBI:57966"/>
    </ligand>
</feature>
<feature type="binding site" evidence="1">
    <location>
        <begin position="144"/>
        <end position="147"/>
    </location>
    <ligand>
        <name>ATP</name>
        <dbReference type="ChEBI" id="CHEBI:30616"/>
    </ligand>
</feature>
<feature type="binding site" evidence="1">
    <location>
        <position position="150"/>
    </location>
    <ligand>
        <name>(R)-pantoate</name>
        <dbReference type="ChEBI" id="CHEBI:15980"/>
    </ligand>
</feature>
<feature type="binding site" evidence="1">
    <location>
        <position position="173"/>
    </location>
    <ligand>
        <name>ATP</name>
        <dbReference type="ChEBI" id="CHEBI:30616"/>
    </ligand>
</feature>
<feature type="binding site" evidence="1">
    <location>
        <begin position="181"/>
        <end position="184"/>
    </location>
    <ligand>
        <name>ATP</name>
        <dbReference type="ChEBI" id="CHEBI:30616"/>
    </ligand>
</feature>
<sequence>MKVISSIQELRDQLRGQNRVAFVPTMGNLHEGHLSLMRLARQHGDPVVASIFVNRLQFGPNEDFDKYPRTLQADIEKLQKEGVYVLFAPTERDMYPEPQEYRVEPPHDLGDILEGEFRPGFFKGVCTVVMKLFSCVQPRVAVFGKKDYQQLMIVRRMANQFALPVDIIPAETVRAEDGLALSSRNAYLSNEERAEAPELYRTLGQVRQTMLETVLQGQASVEEVTAKALEHLRGRGWQPDYVAVRRRSDLQPPTPENIAAGEPLVVLTAAKLGKTRLIDNLEI</sequence>
<protein>
    <recommendedName>
        <fullName evidence="1">Pantothenate synthetase</fullName>
        <shortName evidence="1">PS</shortName>
        <ecNumber evidence="1">6.3.2.1</ecNumber>
    </recommendedName>
    <alternativeName>
        <fullName evidence="1">Pantoate--beta-alanine ligase</fullName>
    </alternativeName>
    <alternativeName>
        <fullName evidence="1">Pantoate-activating enzyme</fullName>
    </alternativeName>
</protein>
<reference key="1">
    <citation type="journal article" date="2002" name="Nature">
        <title>Genome sequence of the plant pathogen Ralstonia solanacearum.</title>
        <authorList>
            <person name="Salanoubat M."/>
            <person name="Genin S."/>
            <person name="Artiguenave F."/>
            <person name="Gouzy J."/>
            <person name="Mangenot S."/>
            <person name="Arlat M."/>
            <person name="Billault A."/>
            <person name="Brottier P."/>
            <person name="Camus J.-C."/>
            <person name="Cattolico L."/>
            <person name="Chandler M."/>
            <person name="Choisne N."/>
            <person name="Claudel-Renard C."/>
            <person name="Cunnac S."/>
            <person name="Demange N."/>
            <person name="Gaspin C."/>
            <person name="Lavie M."/>
            <person name="Moisan A."/>
            <person name="Robert C."/>
            <person name="Saurin W."/>
            <person name="Schiex T."/>
            <person name="Siguier P."/>
            <person name="Thebault P."/>
            <person name="Whalen M."/>
            <person name="Wincker P."/>
            <person name="Levy M."/>
            <person name="Weissenbach J."/>
            <person name="Boucher C.A."/>
        </authorList>
    </citation>
    <scope>NUCLEOTIDE SEQUENCE [LARGE SCALE GENOMIC DNA]</scope>
    <source>
        <strain>ATCC BAA-1114 / GMI1000</strain>
    </source>
</reference>
<proteinExistence type="inferred from homology"/>
<name>PANC_RALN1</name>
<comment type="function">
    <text evidence="1">Catalyzes the condensation of pantoate with beta-alanine in an ATP-dependent reaction via a pantoyl-adenylate intermediate.</text>
</comment>
<comment type="catalytic activity">
    <reaction evidence="1">
        <text>(R)-pantoate + beta-alanine + ATP = (R)-pantothenate + AMP + diphosphate + H(+)</text>
        <dbReference type="Rhea" id="RHEA:10912"/>
        <dbReference type="ChEBI" id="CHEBI:15378"/>
        <dbReference type="ChEBI" id="CHEBI:15980"/>
        <dbReference type="ChEBI" id="CHEBI:29032"/>
        <dbReference type="ChEBI" id="CHEBI:30616"/>
        <dbReference type="ChEBI" id="CHEBI:33019"/>
        <dbReference type="ChEBI" id="CHEBI:57966"/>
        <dbReference type="ChEBI" id="CHEBI:456215"/>
        <dbReference type="EC" id="6.3.2.1"/>
    </reaction>
</comment>
<comment type="pathway">
    <text evidence="1">Cofactor biosynthesis; (R)-pantothenate biosynthesis; (R)-pantothenate from (R)-pantoate and beta-alanine: step 1/1.</text>
</comment>
<comment type="subunit">
    <text evidence="1">Homodimer.</text>
</comment>
<comment type="subcellular location">
    <subcellularLocation>
        <location evidence="1">Cytoplasm</location>
    </subcellularLocation>
</comment>
<comment type="miscellaneous">
    <text evidence="1">The reaction proceeds by a bi uni uni bi ping pong mechanism.</text>
</comment>
<comment type="similarity">
    <text evidence="1">Belongs to the pantothenate synthetase family.</text>
</comment>